<comment type="function">
    <text evidence="2 4">Dolichyl pyrophosphate Glc1Man9GlcNAc2 alpha-1,3-glucosyltransferase that operates in the biosynthetic pathway of dolichol-linked oligosaccharides, the glycan precursors employed in protein asparagine (N)-glycosylation. The assembly of dolichol-linked oligosaccharides begins on the cytosolic side of the endoplasmic reticulum membrane and finishes in its lumen. The sequential addition of sugars to dolichol pyrophosphate produces dolichol-linked oligosaccharides containing fourteen sugars, including two GlcNAcs, nine mannoses and three glucoses. Once assembled, the oligosaccharide is transferred from the lipid to nascent proteins by oligosaccharyltransferases. In the lumen of the endoplasmic reticulum, adds the second glucose residue from dolichyl phosphate glucose (Dol-P-Glc) onto the lipid-linked oligosaccharide intermediate Glc(1)Man(9)GlcNAc(2)-PP-Dol to produce Glc(2)Man(9)GlcNAc(2)-PP-Dol. Glc(2)Man(9)GlcNAc(2)-PP-Dol is a substrate for ALG10, the following enzyme in the biosynthetic pathway (By similarity). Required for PKD1/Polycystin-1 maturation and localization to the plasma membrane of the primary cilia (PubMed:28375157).</text>
</comment>
<comment type="catalytic activity">
    <reaction evidence="2">
        <text>an alpha-D-Glc-(1-&gt;3)-alpha-D-Man-(1-&gt;2)-alpha-D-Man-(1-&gt;2)-alpha-D-Man-(1-&gt;3)-[alpha-D-Man-(1-&gt;2)-alpha-D-Man-(1-&gt;3)-[alpha-D-Man-(1-&gt;2)-alpha-D-Man-(1-&gt;6)]-alpha-D-Man-(1-&gt;6)]-beta-D-Man-(1-&gt;4)-beta-D-GlcNAc-(1-&gt;4)-alpha-D-GlcNAc-diphospho-di-trans,poly-cis-dolichol + a di-trans,poly-cis-dolichyl beta-D-glucosyl phosphate = an alpha-D-Glc-(1-&gt;3)-alpha-D-Glc-(1-&gt;3)-alpha-D-Man-(1-&gt;2)-alpha-D-Man-(1-&gt;2)-alpha-D-Man-(1-&gt;3)-[alpha-D-Man-(1-&gt;2)-alpha-D-Man-(1-&gt;3)-[alpha-D-Man-(1-&gt;2)-alpha-D-Man-(1-&gt;6)]-alpha-D-Man-(1-&gt;6)]-beta-D-Man-(1-&gt;4)-beta-D-GlcNAc-(1-&gt;4)-alpha-D-GlcNAc-diphospho-di-trans,poly-cis-dolichol + a di-trans,poly-cis-dolichyl phosphate + H(+)</text>
        <dbReference type="Rhea" id="RHEA:31307"/>
        <dbReference type="Rhea" id="RHEA-COMP:19498"/>
        <dbReference type="Rhea" id="RHEA-COMP:19502"/>
        <dbReference type="Rhea" id="RHEA-COMP:19521"/>
        <dbReference type="Rhea" id="RHEA-COMP:19522"/>
        <dbReference type="ChEBI" id="CHEBI:15378"/>
        <dbReference type="ChEBI" id="CHEBI:57525"/>
        <dbReference type="ChEBI" id="CHEBI:57683"/>
        <dbReference type="ChEBI" id="CHEBI:132521"/>
        <dbReference type="ChEBI" id="CHEBI:132522"/>
        <dbReference type="EC" id="2.4.1.265"/>
    </reaction>
    <physiologicalReaction direction="left-to-right" evidence="2">
        <dbReference type="Rhea" id="RHEA:31308"/>
    </physiologicalReaction>
</comment>
<comment type="pathway">
    <text evidence="2">Protein modification; protein glycosylation.</text>
</comment>
<comment type="subcellular location">
    <subcellularLocation>
        <location evidence="2">Endoplasmic reticulum membrane</location>
        <topology evidence="3">Multi-pass membrane protein</topology>
    </subcellularLocation>
</comment>
<comment type="similarity">
    <text evidence="6">Belongs to the ALG6/ALG8 glucosyltransferase family.</text>
</comment>
<protein>
    <recommendedName>
        <fullName evidence="2">Dolichyl pyrophosphate Glc1Man9GlcNAc2 alpha-1,3-glucosyltransferase</fullName>
        <ecNumber evidence="2">2.4.1.265</ecNumber>
    </recommendedName>
    <alternativeName>
        <fullName evidence="7">Asparagine-linked glycosylation protein 8 homolog</fullName>
    </alternativeName>
    <alternativeName>
        <fullName evidence="1">Dol-P-Glc:Glc(1)Man(9)GlcNAc(2)-PP-dolichyl alpha-1,3-glucosyltransferase</fullName>
    </alternativeName>
    <alternativeName>
        <fullName evidence="1">Dolichyl-P-Glc:Glc1Man9GlcNAc2-PP-dolichyl glucosyltransferase</fullName>
    </alternativeName>
</protein>
<feature type="chain" id="PRO_0000174163" description="Dolichyl pyrophosphate Glc1Man9GlcNAc2 alpha-1,3-glucosyltransferase">
    <location>
        <begin position="1"/>
        <end position="526"/>
    </location>
</feature>
<feature type="transmembrane region" description="Helical" evidence="3">
    <location>
        <begin position="9"/>
        <end position="29"/>
    </location>
</feature>
<feature type="transmembrane region" description="Helical" evidence="3">
    <location>
        <begin position="108"/>
        <end position="128"/>
    </location>
</feature>
<feature type="transmembrane region" description="Helical" evidence="3">
    <location>
        <begin position="143"/>
        <end position="163"/>
    </location>
</feature>
<feature type="transmembrane region" description="Helical" evidence="3">
    <location>
        <begin position="188"/>
        <end position="208"/>
    </location>
</feature>
<feature type="transmembrane region" description="Helical" evidence="3">
    <location>
        <begin position="238"/>
        <end position="258"/>
    </location>
</feature>
<feature type="transmembrane region" description="Helical" evidence="3">
    <location>
        <begin position="334"/>
        <end position="354"/>
    </location>
</feature>
<feature type="transmembrane region" description="Helical" evidence="3">
    <location>
        <begin position="361"/>
        <end position="380"/>
    </location>
</feature>
<feature type="transmembrane region" description="Helical" evidence="3">
    <location>
        <begin position="400"/>
        <end position="422"/>
    </location>
</feature>
<feature type="transmembrane region" description="Helical" evidence="3">
    <location>
        <begin position="427"/>
        <end position="449"/>
    </location>
</feature>
<feature type="transmembrane region" description="Helical" evidence="3">
    <location>
        <begin position="461"/>
        <end position="481"/>
    </location>
</feature>
<feature type="transmembrane region" description="Helical" evidence="3">
    <location>
        <begin position="487"/>
        <end position="507"/>
    </location>
</feature>
<feature type="sequence conflict" description="In Ref. 4; AAH61244." evidence="6" ref="4">
    <original>A</original>
    <variation>G</variation>
    <location>
        <position position="9"/>
    </location>
</feature>
<proteinExistence type="evidence at transcript level"/>
<name>ALG8_MOUSE</name>
<organism>
    <name type="scientific">Mus musculus</name>
    <name type="common">Mouse</name>
    <dbReference type="NCBI Taxonomy" id="10090"/>
    <lineage>
        <taxon>Eukaryota</taxon>
        <taxon>Metazoa</taxon>
        <taxon>Chordata</taxon>
        <taxon>Craniata</taxon>
        <taxon>Vertebrata</taxon>
        <taxon>Euteleostomi</taxon>
        <taxon>Mammalia</taxon>
        <taxon>Eutheria</taxon>
        <taxon>Euarchontoglires</taxon>
        <taxon>Glires</taxon>
        <taxon>Rodentia</taxon>
        <taxon>Myomorpha</taxon>
        <taxon>Muroidea</taxon>
        <taxon>Muridae</taxon>
        <taxon>Murinae</taxon>
        <taxon>Mus</taxon>
        <taxon>Mus</taxon>
    </lineage>
</organism>
<gene>
    <name evidence="5 7" type="primary">Alg8</name>
    <name type="synonym">Gm1089</name>
</gene>
<keyword id="KW-0256">Endoplasmic reticulum</keyword>
<keyword id="KW-0328">Glycosyltransferase</keyword>
<keyword id="KW-0472">Membrane</keyword>
<keyword id="KW-1185">Reference proteome</keyword>
<keyword id="KW-0808">Transferase</keyword>
<keyword id="KW-0812">Transmembrane</keyword>
<keyword id="KW-1133">Transmembrane helix</keyword>
<evidence type="ECO:0000250" key="1">
    <source>
        <dbReference type="UniProtKB" id="P40351"/>
    </source>
</evidence>
<evidence type="ECO:0000250" key="2">
    <source>
        <dbReference type="UniProtKB" id="Q9BVK2"/>
    </source>
</evidence>
<evidence type="ECO:0000255" key="3"/>
<evidence type="ECO:0000269" key="4">
    <source>
    </source>
</evidence>
<evidence type="ECO:0000303" key="5">
    <source>
    </source>
</evidence>
<evidence type="ECO:0000305" key="6"/>
<evidence type="ECO:0000312" key="7">
    <source>
        <dbReference type="MGI" id="MGI:2141959"/>
    </source>
</evidence>
<reference key="1">
    <citation type="journal article" date="2005" name="Science">
        <title>The transcriptional landscape of the mammalian genome.</title>
        <authorList>
            <person name="Carninci P."/>
            <person name="Kasukawa T."/>
            <person name="Katayama S."/>
            <person name="Gough J."/>
            <person name="Frith M.C."/>
            <person name="Maeda N."/>
            <person name="Oyama R."/>
            <person name="Ravasi T."/>
            <person name="Lenhard B."/>
            <person name="Wells C."/>
            <person name="Kodzius R."/>
            <person name="Shimokawa K."/>
            <person name="Bajic V.B."/>
            <person name="Brenner S.E."/>
            <person name="Batalov S."/>
            <person name="Forrest A.R."/>
            <person name="Zavolan M."/>
            <person name="Davis M.J."/>
            <person name="Wilming L.G."/>
            <person name="Aidinis V."/>
            <person name="Allen J.E."/>
            <person name="Ambesi-Impiombato A."/>
            <person name="Apweiler R."/>
            <person name="Aturaliya R.N."/>
            <person name="Bailey T.L."/>
            <person name="Bansal M."/>
            <person name="Baxter L."/>
            <person name="Beisel K.W."/>
            <person name="Bersano T."/>
            <person name="Bono H."/>
            <person name="Chalk A.M."/>
            <person name="Chiu K.P."/>
            <person name="Choudhary V."/>
            <person name="Christoffels A."/>
            <person name="Clutterbuck D.R."/>
            <person name="Crowe M.L."/>
            <person name="Dalla E."/>
            <person name="Dalrymple B.P."/>
            <person name="de Bono B."/>
            <person name="Della Gatta G."/>
            <person name="di Bernardo D."/>
            <person name="Down T."/>
            <person name="Engstrom P."/>
            <person name="Fagiolini M."/>
            <person name="Faulkner G."/>
            <person name="Fletcher C.F."/>
            <person name="Fukushima T."/>
            <person name="Furuno M."/>
            <person name="Futaki S."/>
            <person name="Gariboldi M."/>
            <person name="Georgii-Hemming P."/>
            <person name="Gingeras T.R."/>
            <person name="Gojobori T."/>
            <person name="Green R.E."/>
            <person name="Gustincich S."/>
            <person name="Harbers M."/>
            <person name="Hayashi Y."/>
            <person name="Hensch T.K."/>
            <person name="Hirokawa N."/>
            <person name="Hill D."/>
            <person name="Huminiecki L."/>
            <person name="Iacono M."/>
            <person name="Ikeo K."/>
            <person name="Iwama A."/>
            <person name="Ishikawa T."/>
            <person name="Jakt M."/>
            <person name="Kanapin A."/>
            <person name="Katoh M."/>
            <person name="Kawasawa Y."/>
            <person name="Kelso J."/>
            <person name="Kitamura H."/>
            <person name="Kitano H."/>
            <person name="Kollias G."/>
            <person name="Krishnan S.P."/>
            <person name="Kruger A."/>
            <person name="Kummerfeld S.K."/>
            <person name="Kurochkin I.V."/>
            <person name="Lareau L.F."/>
            <person name="Lazarevic D."/>
            <person name="Lipovich L."/>
            <person name="Liu J."/>
            <person name="Liuni S."/>
            <person name="McWilliam S."/>
            <person name="Madan Babu M."/>
            <person name="Madera M."/>
            <person name="Marchionni L."/>
            <person name="Matsuda H."/>
            <person name="Matsuzawa S."/>
            <person name="Miki H."/>
            <person name="Mignone F."/>
            <person name="Miyake S."/>
            <person name="Morris K."/>
            <person name="Mottagui-Tabar S."/>
            <person name="Mulder N."/>
            <person name="Nakano N."/>
            <person name="Nakauchi H."/>
            <person name="Ng P."/>
            <person name="Nilsson R."/>
            <person name="Nishiguchi S."/>
            <person name="Nishikawa S."/>
            <person name="Nori F."/>
            <person name="Ohara O."/>
            <person name="Okazaki Y."/>
            <person name="Orlando V."/>
            <person name="Pang K.C."/>
            <person name="Pavan W.J."/>
            <person name="Pavesi G."/>
            <person name="Pesole G."/>
            <person name="Petrovsky N."/>
            <person name="Piazza S."/>
            <person name="Reed J."/>
            <person name="Reid J.F."/>
            <person name="Ring B.Z."/>
            <person name="Ringwald M."/>
            <person name="Rost B."/>
            <person name="Ruan Y."/>
            <person name="Salzberg S.L."/>
            <person name="Sandelin A."/>
            <person name="Schneider C."/>
            <person name="Schoenbach C."/>
            <person name="Sekiguchi K."/>
            <person name="Semple C.A."/>
            <person name="Seno S."/>
            <person name="Sessa L."/>
            <person name="Sheng Y."/>
            <person name="Shibata Y."/>
            <person name="Shimada H."/>
            <person name="Shimada K."/>
            <person name="Silva D."/>
            <person name="Sinclair B."/>
            <person name="Sperling S."/>
            <person name="Stupka E."/>
            <person name="Sugiura K."/>
            <person name="Sultana R."/>
            <person name="Takenaka Y."/>
            <person name="Taki K."/>
            <person name="Tammoja K."/>
            <person name="Tan S.L."/>
            <person name="Tang S."/>
            <person name="Taylor M.S."/>
            <person name="Tegner J."/>
            <person name="Teichmann S.A."/>
            <person name="Ueda H.R."/>
            <person name="van Nimwegen E."/>
            <person name="Verardo R."/>
            <person name="Wei C.L."/>
            <person name="Yagi K."/>
            <person name="Yamanishi H."/>
            <person name="Zabarovsky E."/>
            <person name="Zhu S."/>
            <person name="Zimmer A."/>
            <person name="Hide W."/>
            <person name="Bult C."/>
            <person name="Grimmond S.M."/>
            <person name="Teasdale R.D."/>
            <person name="Liu E.T."/>
            <person name="Brusic V."/>
            <person name="Quackenbush J."/>
            <person name="Wahlestedt C."/>
            <person name="Mattick J.S."/>
            <person name="Hume D.A."/>
            <person name="Kai C."/>
            <person name="Sasaki D."/>
            <person name="Tomaru Y."/>
            <person name="Fukuda S."/>
            <person name="Kanamori-Katayama M."/>
            <person name="Suzuki M."/>
            <person name="Aoki J."/>
            <person name="Arakawa T."/>
            <person name="Iida J."/>
            <person name="Imamura K."/>
            <person name="Itoh M."/>
            <person name="Kato T."/>
            <person name="Kawaji H."/>
            <person name="Kawagashira N."/>
            <person name="Kawashima T."/>
            <person name="Kojima M."/>
            <person name="Kondo S."/>
            <person name="Konno H."/>
            <person name="Nakano K."/>
            <person name="Ninomiya N."/>
            <person name="Nishio T."/>
            <person name="Okada M."/>
            <person name="Plessy C."/>
            <person name="Shibata K."/>
            <person name="Shiraki T."/>
            <person name="Suzuki S."/>
            <person name="Tagami M."/>
            <person name="Waki K."/>
            <person name="Watahiki A."/>
            <person name="Okamura-Oho Y."/>
            <person name="Suzuki H."/>
            <person name="Kawai J."/>
            <person name="Hayashizaki Y."/>
        </authorList>
    </citation>
    <scope>NUCLEOTIDE SEQUENCE [LARGE SCALE MRNA]</scope>
    <source>
        <strain>C57BL/6J</strain>
    </source>
</reference>
<reference key="2">
    <citation type="journal article" date="2009" name="PLoS Biol.">
        <title>Lineage-specific biology revealed by a finished genome assembly of the mouse.</title>
        <authorList>
            <person name="Church D.M."/>
            <person name="Goodstadt L."/>
            <person name="Hillier L.W."/>
            <person name="Zody M.C."/>
            <person name="Goldstein S."/>
            <person name="She X."/>
            <person name="Bult C.J."/>
            <person name="Agarwala R."/>
            <person name="Cherry J.L."/>
            <person name="DiCuccio M."/>
            <person name="Hlavina W."/>
            <person name="Kapustin Y."/>
            <person name="Meric P."/>
            <person name="Maglott D."/>
            <person name="Birtle Z."/>
            <person name="Marques A.C."/>
            <person name="Graves T."/>
            <person name="Zhou S."/>
            <person name="Teague B."/>
            <person name="Potamousis K."/>
            <person name="Churas C."/>
            <person name="Place M."/>
            <person name="Herschleb J."/>
            <person name="Runnheim R."/>
            <person name="Forrest D."/>
            <person name="Amos-Landgraf J."/>
            <person name="Schwartz D.C."/>
            <person name="Cheng Z."/>
            <person name="Lindblad-Toh K."/>
            <person name="Eichler E.E."/>
            <person name="Ponting C.P."/>
        </authorList>
    </citation>
    <scope>NUCLEOTIDE SEQUENCE [LARGE SCALE GENOMIC DNA]</scope>
    <source>
        <strain>C57BL/6J</strain>
    </source>
</reference>
<reference key="3">
    <citation type="submission" date="2005-07" db="EMBL/GenBank/DDBJ databases">
        <authorList>
            <person name="Mural R.J."/>
            <person name="Adams M.D."/>
            <person name="Myers E.W."/>
            <person name="Smith H.O."/>
            <person name="Venter J.C."/>
        </authorList>
    </citation>
    <scope>NUCLEOTIDE SEQUENCE [LARGE SCALE GENOMIC DNA]</scope>
</reference>
<reference key="4">
    <citation type="journal article" date="2004" name="Genome Res.">
        <title>The status, quality, and expansion of the NIH full-length cDNA project: the Mammalian Gene Collection (MGC).</title>
        <authorList>
            <consortium name="The MGC Project Team"/>
        </authorList>
    </citation>
    <scope>NUCLEOTIDE SEQUENCE [LARGE SCALE MRNA]</scope>
    <source>
        <tissue>Pituitary</tissue>
    </source>
</reference>
<reference key="5">
    <citation type="journal article" date="2017" name="J. Clin. Invest.">
        <title>Isolated polycystic liver disease genes define effectors of polycystin-1 function.</title>
        <authorList>
            <person name="Besse W."/>
            <person name="Dong K."/>
            <person name="Choi J."/>
            <person name="Punia S."/>
            <person name="Fedeles S.V."/>
            <person name="Choi M."/>
            <person name="Gallagher A.R."/>
            <person name="Huang E.B."/>
            <person name="Gulati A."/>
            <person name="Knight J."/>
            <person name="Mane S."/>
            <person name="Tahvanainen E."/>
            <person name="Tahvanainen P."/>
            <person name="Sanna-Cherchi S."/>
            <person name="Lifton R.P."/>
            <person name="Watnick T."/>
            <person name="Pei Y.P."/>
            <person name="Torres V.E."/>
            <person name="Somlo S."/>
        </authorList>
    </citation>
    <scope>FUNCTION</scope>
</reference>
<accession>Q6P8H8</accession>
<accession>E9Q3H5</accession>
<accession>Q3TKP5</accession>
<dbReference type="EC" id="2.4.1.265" evidence="2"/>
<dbReference type="EMBL" id="AK166755">
    <property type="protein sequence ID" value="BAE38996.1"/>
    <property type="molecule type" value="mRNA"/>
</dbReference>
<dbReference type="EMBL" id="AK166897">
    <property type="protein sequence ID" value="BAE39100.1"/>
    <property type="molecule type" value="mRNA"/>
</dbReference>
<dbReference type="EMBL" id="AC155933">
    <property type="status" value="NOT_ANNOTATED_CDS"/>
    <property type="molecule type" value="Genomic_DNA"/>
</dbReference>
<dbReference type="EMBL" id="CH466531">
    <property type="protein sequence ID" value="EDL16291.1"/>
    <property type="molecule type" value="Genomic_DNA"/>
</dbReference>
<dbReference type="EMBL" id="BC061244">
    <property type="protein sequence ID" value="AAH61244.1"/>
    <property type="molecule type" value="mRNA"/>
</dbReference>
<dbReference type="CCDS" id="CCDS52313.1"/>
<dbReference type="RefSeq" id="NP_950200.2">
    <property type="nucleotide sequence ID" value="NM_199035.2"/>
</dbReference>
<dbReference type="SMR" id="Q6P8H8"/>
<dbReference type="BioGRID" id="238146">
    <property type="interactions" value="1"/>
</dbReference>
<dbReference type="FunCoup" id="Q6P8H8">
    <property type="interactions" value="2373"/>
</dbReference>
<dbReference type="STRING" id="10090.ENSMUSP00000095901"/>
<dbReference type="CAZy" id="GT57">
    <property type="family name" value="Glycosyltransferase Family 57"/>
</dbReference>
<dbReference type="PhosphoSitePlus" id="Q6P8H8"/>
<dbReference type="PaxDb" id="10090-ENSMUSP00000095901"/>
<dbReference type="ProteomicsDB" id="296194"/>
<dbReference type="Pumba" id="Q6P8H8"/>
<dbReference type="Antibodypedia" id="31296">
    <property type="antibodies" value="112 antibodies from 20 providers"/>
</dbReference>
<dbReference type="DNASU" id="381903"/>
<dbReference type="Ensembl" id="ENSMUST00000098300.6">
    <property type="protein sequence ID" value="ENSMUSP00000095901.5"/>
    <property type="gene ID" value="ENSMUSG00000035704.18"/>
</dbReference>
<dbReference type="GeneID" id="381903"/>
<dbReference type="KEGG" id="mmu:381903"/>
<dbReference type="UCSC" id="uc009ijc.2">
    <property type="organism name" value="mouse"/>
</dbReference>
<dbReference type="AGR" id="MGI:2141959"/>
<dbReference type="CTD" id="79053"/>
<dbReference type="MGI" id="MGI:2141959">
    <property type="gene designation" value="Alg8"/>
</dbReference>
<dbReference type="VEuPathDB" id="HostDB:ENSMUSG00000035704"/>
<dbReference type="eggNOG" id="KOG2576">
    <property type="taxonomic scope" value="Eukaryota"/>
</dbReference>
<dbReference type="GeneTree" id="ENSGT00940000153733"/>
<dbReference type="HOGENOM" id="CLU_022045_2_0_1"/>
<dbReference type="InParanoid" id="Q6P8H8"/>
<dbReference type="OMA" id="YHSTDFD"/>
<dbReference type="OrthoDB" id="1689333at2759"/>
<dbReference type="PhylomeDB" id="Q6P8H8"/>
<dbReference type="TreeFam" id="TF315002"/>
<dbReference type="Reactome" id="R-MMU-446193">
    <property type="pathway name" value="Biosynthesis of the N-glycan precursor (dolichol lipid-linked oligosaccharide, LLO) and transfer to a nascent protein"/>
</dbReference>
<dbReference type="UniPathway" id="UPA00378"/>
<dbReference type="BioGRID-ORCS" id="381903">
    <property type="hits" value="22 hits in 80 CRISPR screens"/>
</dbReference>
<dbReference type="ChiTaRS" id="Alg8">
    <property type="organism name" value="mouse"/>
</dbReference>
<dbReference type="PRO" id="PR:Q6P8H8"/>
<dbReference type="Proteomes" id="UP000000589">
    <property type="component" value="Chromosome 7"/>
</dbReference>
<dbReference type="RNAct" id="Q6P8H8">
    <property type="molecule type" value="protein"/>
</dbReference>
<dbReference type="Bgee" id="ENSMUSG00000035704">
    <property type="expression patterns" value="Expressed in embryonic post-anal tail and 229 other cell types or tissues"/>
</dbReference>
<dbReference type="GO" id="GO:0005789">
    <property type="term" value="C:endoplasmic reticulum membrane"/>
    <property type="evidence" value="ECO:0000250"/>
    <property type="project" value="UniProtKB"/>
</dbReference>
<dbReference type="GO" id="GO:0042283">
    <property type="term" value="F:dolichyl pyrophosphate Glc1Man9GlcNAc2 alpha-1,3-glucosyltransferase activity"/>
    <property type="evidence" value="ECO:0000250"/>
    <property type="project" value="UniProtKB"/>
</dbReference>
<dbReference type="GO" id="GO:0006488">
    <property type="term" value="P:dolichol-linked oligosaccharide biosynthetic process"/>
    <property type="evidence" value="ECO:0000250"/>
    <property type="project" value="UniProtKB"/>
</dbReference>
<dbReference type="GO" id="GO:0006487">
    <property type="term" value="P:protein N-linked glycosylation"/>
    <property type="evidence" value="ECO:0000250"/>
    <property type="project" value="UniProtKB"/>
</dbReference>
<dbReference type="GO" id="GO:0018279">
    <property type="term" value="P:protein N-linked glycosylation via asparagine"/>
    <property type="evidence" value="ECO:0000315"/>
    <property type="project" value="UniProtKB"/>
</dbReference>
<dbReference type="InterPro" id="IPR004856">
    <property type="entry name" value="Glyco_trans_ALG6/ALG8"/>
</dbReference>
<dbReference type="PANTHER" id="PTHR12413">
    <property type="entry name" value="DOLICHYL GLYCOSYLTRANSFERASE"/>
    <property type="match status" value="1"/>
</dbReference>
<dbReference type="PANTHER" id="PTHR12413:SF2">
    <property type="entry name" value="DOLICHYL PYROPHOSPHATE GLC1MAN9GLCNAC2 ALPHA-1,3-GLUCOSYLTRANSFERASE-RELATED"/>
    <property type="match status" value="1"/>
</dbReference>
<dbReference type="Pfam" id="PF03155">
    <property type="entry name" value="Alg6_Alg8"/>
    <property type="match status" value="1"/>
</dbReference>
<sequence length="526" mass="59535">MAASGSATAGGHWFSALALGVTLLKCLLIPTYHSTDFEVHRNWLAITHSLPISQWYYEATSEWTLDYPPFFAWFEYALSHIAKYFDQEMLNIHNLNYYSSRTLLFQRFSVILTDALFVYAVHECCKCIDGKRTGKDLTEKPKFILSVLLLWNFGLLIVDHIHFQYNGFLSGLLLLSIARLFQKRHIEGALLFAVLLHLKHIYLYVAPAYGVYLLRSYCFTASKPDGSVRWSSFSVVRVTSLGLIVFLVSALSLGPFLALNQLPQVFSRLFPFKRGLCHAYWAPNFWALYNALDKVLSVIGLKLKLLDPSQIPRASMTSGLVQQFQHTVLPSVSPLATLICTLIAILPSVFCLWFKPQGPRGFLRCLVLCALSSFMFGWHVHEKAILLAILPMSLLSVEKAGDATVFLILATTGHYSLFPLLFTAPELPIKILLMLLFTVYSISSLKTLFRKEKPLFNWMETVYLLGLGPLEVCCEFLLPFTSWKLKYPFIPLLLTSVYCAVGITYAWTRLYASVLTGSLVSKTKKH</sequence>